<comment type="function">
    <text evidence="2">Might play a role in adipocyte differentiation and triglyceride accumulation.</text>
</comment>
<comment type="subunit">
    <text evidence="3">Interacts with dynactin subunit proteins, including DCTN4, DCTN5 and DCTN5.</text>
</comment>
<comment type="alternative products">
    <event type="alternative splicing"/>
    <isoform>
        <id>Q3V2Q8-1</id>
        <name>1</name>
        <sequence type="displayed"/>
    </isoform>
    <isoform>
        <id>Q3V2Q8-2</id>
        <name>2</name>
        <sequence type="described" ref="VSP_031320"/>
    </isoform>
</comment>
<comment type="developmental stage">
    <text evidence="2">Up-regulated in 3T3-L1 cells during differentiation into adipocytes (at protein level).</text>
</comment>
<comment type="induction">
    <text evidence="2 3">Up-regulated by USF1 in 3T3-L1 cells (PubMed:31440585). Up-regulated by FOXO1 in 3T3-L1 cells (PubMed:34197691).</text>
</comment>
<comment type="sequence caution" evidence="5">
    <conflict type="frameshift">
        <sequence resource="EMBL-CDS" id="BAC32606"/>
    </conflict>
</comment>
<sequence length="238" mass="28038">MEDSFLESFGRLSLQQRQQQPPPRPPPARGPPPRRHSFRKHLYLLRGLPGSGKTTLARQLQHDYPRALIFSTDDFFFKEDGTYEFNPNLLEEAHEWNQRRARKAMRNGISPIIIDNTNLHAWEMKPYAVMALENNYEVIFREPDTRWKFNVQELARRNIHGVPKEKIQRMKERYEHNVTFHSVLHAEKPSRANRNQGRNSEPSSGSGYWNTYTELPNRRANGLYSNEGYRRGGHHQGY</sequence>
<dbReference type="EMBL" id="AK046116">
    <property type="protein sequence ID" value="BAC32606.1"/>
    <property type="status" value="ALT_FRAME"/>
    <property type="molecule type" value="mRNA"/>
</dbReference>
<dbReference type="EMBL" id="AK131647">
    <property type="protein sequence ID" value="BAE20739.1"/>
    <property type="molecule type" value="mRNA"/>
</dbReference>
<dbReference type="EMBL" id="AK138666">
    <property type="protein sequence ID" value="BAE23739.1"/>
    <property type="molecule type" value="mRNA"/>
</dbReference>
<dbReference type="EMBL" id="BC019754">
    <property type="protein sequence ID" value="AAH19754.1"/>
    <property type="molecule type" value="mRNA"/>
</dbReference>
<dbReference type="CCDS" id="CCDS19887.1">
    <molecule id="Q3V2Q8-1"/>
</dbReference>
<dbReference type="RefSeq" id="NP_598659.3">
    <molecule id="Q3V2Q8-1"/>
    <property type="nucleotide sequence ID" value="NM_133898.4"/>
</dbReference>
<dbReference type="SMR" id="Q3V2Q8"/>
<dbReference type="FunCoup" id="Q3V2Q8">
    <property type="interactions" value="3"/>
</dbReference>
<dbReference type="STRING" id="10090.ENSMUSP00000016279"/>
<dbReference type="iPTMnet" id="Q3V2Q8"/>
<dbReference type="PhosphoSitePlus" id="Q3V2Q8"/>
<dbReference type="PaxDb" id="10090-ENSMUSP00000016279"/>
<dbReference type="PeptideAtlas" id="Q3V2Q8"/>
<dbReference type="ProteomicsDB" id="286133">
    <molecule id="Q3V2Q8-1"/>
</dbReference>
<dbReference type="ProteomicsDB" id="286134">
    <molecule id="Q3V2Q8-2"/>
</dbReference>
<dbReference type="Antibodypedia" id="49139">
    <property type="antibodies" value="36 antibodies from 15 providers"/>
</dbReference>
<dbReference type="DNASU" id="100637"/>
<dbReference type="Ensembl" id="ENSMUST00000016279.11">
    <molecule id="Q3V2Q8-1"/>
    <property type="protein sequence ID" value="ENSMUSP00000016279.8"/>
    <property type="gene ID" value="ENSMUSG00000041132.12"/>
</dbReference>
<dbReference type="Ensembl" id="ENSMUST00000202031.4">
    <molecule id="Q3V2Q8-2"/>
    <property type="protein sequence ID" value="ENSMUSP00000144164.2"/>
    <property type="gene ID" value="ENSMUSG00000041132.12"/>
</dbReference>
<dbReference type="GeneID" id="100637"/>
<dbReference type="KEGG" id="mmu:100637"/>
<dbReference type="UCSC" id="uc009aub.2">
    <molecule id="Q3V2Q8-1"/>
    <property type="organism name" value="mouse"/>
</dbReference>
<dbReference type="AGR" id="MGI:2140872"/>
<dbReference type="CTD" id="90634"/>
<dbReference type="MGI" id="MGI:2140872">
    <property type="gene designation" value="N4bp2l1"/>
</dbReference>
<dbReference type="VEuPathDB" id="HostDB:ENSMUSG00000041132"/>
<dbReference type="eggNOG" id="KOG2401">
    <property type="taxonomic scope" value="Eukaryota"/>
</dbReference>
<dbReference type="GeneTree" id="ENSGT00940000161564"/>
<dbReference type="HOGENOM" id="CLU_083043_1_0_1"/>
<dbReference type="InParanoid" id="Q3V2Q8"/>
<dbReference type="OMA" id="GYWNTYS"/>
<dbReference type="OrthoDB" id="3231855at2759"/>
<dbReference type="PhylomeDB" id="Q3V2Q8"/>
<dbReference type="TreeFam" id="TF339118"/>
<dbReference type="BioGRID-ORCS" id="100637">
    <property type="hits" value="3 hits in 77 CRISPR screens"/>
</dbReference>
<dbReference type="ChiTaRS" id="N4bp2l1">
    <property type="organism name" value="mouse"/>
</dbReference>
<dbReference type="PRO" id="PR:Q3V2Q8"/>
<dbReference type="Proteomes" id="UP000000589">
    <property type="component" value="Chromosome 5"/>
</dbReference>
<dbReference type="RNAct" id="Q3V2Q8">
    <property type="molecule type" value="protein"/>
</dbReference>
<dbReference type="Bgee" id="ENSMUSG00000041132">
    <property type="expression patterns" value="Expressed in dorsomedial nucleus of hypothalamus and 228 other cell types or tissues"/>
</dbReference>
<dbReference type="ExpressionAtlas" id="Q3V2Q8">
    <property type="expression patterns" value="baseline and differential"/>
</dbReference>
<dbReference type="Gene3D" id="3.40.50.300">
    <property type="entry name" value="P-loop containing nucleotide triphosphate hydrolases"/>
    <property type="match status" value="1"/>
</dbReference>
<dbReference type="InterPro" id="IPR026302">
    <property type="entry name" value="NEDD4-bd_p2"/>
</dbReference>
<dbReference type="InterPro" id="IPR027417">
    <property type="entry name" value="P-loop_NTPase"/>
</dbReference>
<dbReference type="PANTHER" id="PTHR13308">
    <property type="entry name" value="NEDD4-BINDING PROTEIN 2-LIKE 1"/>
    <property type="match status" value="1"/>
</dbReference>
<dbReference type="PANTHER" id="PTHR13308:SF5">
    <property type="entry name" value="NEDD4-BINDING PROTEIN 2-LIKE 1"/>
    <property type="match status" value="1"/>
</dbReference>
<dbReference type="Pfam" id="PF13671">
    <property type="entry name" value="AAA_33"/>
    <property type="match status" value="1"/>
</dbReference>
<dbReference type="SUPFAM" id="SSF52540">
    <property type="entry name" value="P-loop containing nucleoside triphosphate hydrolases"/>
    <property type="match status" value="1"/>
</dbReference>
<protein>
    <recommendedName>
        <fullName>NEDD4-binding protein 2-like 1</fullName>
    </recommendedName>
</protein>
<feature type="chain" id="PRO_0000318959" description="NEDD4-binding protein 2-like 1">
    <location>
        <begin position="1"/>
        <end position="238"/>
    </location>
</feature>
<feature type="region of interest" description="Disordered" evidence="1">
    <location>
        <begin position="1"/>
        <end position="36"/>
    </location>
</feature>
<feature type="region of interest" description="Disordered" evidence="1">
    <location>
        <begin position="183"/>
        <end position="212"/>
    </location>
</feature>
<feature type="compositionally biased region" description="Pro residues" evidence="1">
    <location>
        <begin position="20"/>
        <end position="31"/>
    </location>
</feature>
<feature type="compositionally biased region" description="Polar residues" evidence="1">
    <location>
        <begin position="192"/>
        <end position="212"/>
    </location>
</feature>
<feature type="splice variant" id="VSP_031320" description="In isoform 2." evidence="4">
    <location>
        <begin position="1"/>
        <end position="104"/>
    </location>
</feature>
<feature type="sequence conflict" description="In Ref. 1; BAC32606." evidence="5" ref="1">
    <original>M</original>
    <variation>V</variation>
    <location>
        <position position="130"/>
    </location>
</feature>
<reference key="1">
    <citation type="journal article" date="2005" name="Science">
        <title>The transcriptional landscape of the mammalian genome.</title>
        <authorList>
            <person name="Carninci P."/>
            <person name="Kasukawa T."/>
            <person name="Katayama S."/>
            <person name="Gough J."/>
            <person name="Frith M.C."/>
            <person name="Maeda N."/>
            <person name="Oyama R."/>
            <person name="Ravasi T."/>
            <person name="Lenhard B."/>
            <person name="Wells C."/>
            <person name="Kodzius R."/>
            <person name="Shimokawa K."/>
            <person name="Bajic V.B."/>
            <person name="Brenner S.E."/>
            <person name="Batalov S."/>
            <person name="Forrest A.R."/>
            <person name="Zavolan M."/>
            <person name="Davis M.J."/>
            <person name="Wilming L.G."/>
            <person name="Aidinis V."/>
            <person name="Allen J.E."/>
            <person name="Ambesi-Impiombato A."/>
            <person name="Apweiler R."/>
            <person name="Aturaliya R.N."/>
            <person name="Bailey T.L."/>
            <person name="Bansal M."/>
            <person name="Baxter L."/>
            <person name="Beisel K.W."/>
            <person name="Bersano T."/>
            <person name="Bono H."/>
            <person name="Chalk A.M."/>
            <person name="Chiu K.P."/>
            <person name="Choudhary V."/>
            <person name="Christoffels A."/>
            <person name="Clutterbuck D.R."/>
            <person name="Crowe M.L."/>
            <person name="Dalla E."/>
            <person name="Dalrymple B.P."/>
            <person name="de Bono B."/>
            <person name="Della Gatta G."/>
            <person name="di Bernardo D."/>
            <person name="Down T."/>
            <person name="Engstrom P."/>
            <person name="Fagiolini M."/>
            <person name="Faulkner G."/>
            <person name="Fletcher C.F."/>
            <person name="Fukushima T."/>
            <person name="Furuno M."/>
            <person name="Futaki S."/>
            <person name="Gariboldi M."/>
            <person name="Georgii-Hemming P."/>
            <person name="Gingeras T.R."/>
            <person name="Gojobori T."/>
            <person name="Green R.E."/>
            <person name="Gustincich S."/>
            <person name="Harbers M."/>
            <person name="Hayashi Y."/>
            <person name="Hensch T.K."/>
            <person name="Hirokawa N."/>
            <person name="Hill D."/>
            <person name="Huminiecki L."/>
            <person name="Iacono M."/>
            <person name="Ikeo K."/>
            <person name="Iwama A."/>
            <person name="Ishikawa T."/>
            <person name="Jakt M."/>
            <person name="Kanapin A."/>
            <person name="Katoh M."/>
            <person name="Kawasawa Y."/>
            <person name="Kelso J."/>
            <person name="Kitamura H."/>
            <person name="Kitano H."/>
            <person name="Kollias G."/>
            <person name="Krishnan S.P."/>
            <person name="Kruger A."/>
            <person name="Kummerfeld S.K."/>
            <person name="Kurochkin I.V."/>
            <person name="Lareau L.F."/>
            <person name="Lazarevic D."/>
            <person name="Lipovich L."/>
            <person name="Liu J."/>
            <person name="Liuni S."/>
            <person name="McWilliam S."/>
            <person name="Madan Babu M."/>
            <person name="Madera M."/>
            <person name="Marchionni L."/>
            <person name="Matsuda H."/>
            <person name="Matsuzawa S."/>
            <person name="Miki H."/>
            <person name="Mignone F."/>
            <person name="Miyake S."/>
            <person name="Morris K."/>
            <person name="Mottagui-Tabar S."/>
            <person name="Mulder N."/>
            <person name="Nakano N."/>
            <person name="Nakauchi H."/>
            <person name="Ng P."/>
            <person name="Nilsson R."/>
            <person name="Nishiguchi S."/>
            <person name="Nishikawa S."/>
            <person name="Nori F."/>
            <person name="Ohara O."/>
            <person name="Okazaki Y."/>
            <person name="Orlando V."/>
            <person name="Pang K.C."/>
            <person name="Pavan W.J."/>
            <person name="Pavesi G."/>
            <person name="Pesole G."/>
            <person name="Petrovsky N."/>
            <person name="Piazza S."/>
            <person name="Reed J."/>
            <person name="Reid J.F."/>
            <person name="Ring B.Z."/>
            <person name="Ringwald M."/>
            <person name="Rost B."/>
            <person name="Ruan Y."/>
            <person name="Salzberg S.L."/>
            <person name="Sandelin A."/>
            <person name="Schneider C."/>
            <person name="Schoenbach C."/>
            <person name="Sekiguchi K."/>
            <person name="Semple C.A."/>
            <person name="Seno S."/>
            <person name="Sessa L."/>
            <person name="Sheng Y."/>
            <person name="Shibata Y."/>
            <person name="Shimada H."/>
            <person name="Shimada K."/>
            <person name="Silva D."/>
            <person name="Sinclair B."/>
            <person name="Sperling S."/>
            <person name="Stupka E."/>
            <person name="Sugiura K."/>
            <person name="Sultana R."/>
            <person name="Takenaka Y."/>
            <person name="Taki K."/>
            <person name="Tammoja K."/>
            <person name="Tan S.L."/>
            <person name="Tang S."/>
            <person name="Taylor M.S."/>
            <person name="Tegner J."/>
            <person name="Teichmann S.A."/>
            <person name="Ueda H.R."/>
            <person name="van Nimwegen E."/>
            <person name="Verardo R."/>
            <person name="Wei C.L."/>
            <person name="Yagi K."/>
            <person name="Yamanishi H."/>
            <person name="Zabarovsky E."/>
            <person name="Zhu S."/>
            <person name="Zimmer A."/>
            <person name="Hide W."/>
            <person name="Bult C."/>
            <person name="Grimmond S.M."/>
            <person name="Teasdale R.D."/>
            <person name="Liu E.T."/>
            <person name="Brusic V."/>
            <person name="Quackenbush J."/>
            <person name="Wahlestedt C."/>
            <person name="Mattick J.S."/>
            <person name="Hume D.A."/>
            <person name="Kai C."/>
            <person name="Sasaki D."/>
            <person name="Tomaru Y."/>
            <person name="Fukuda S."/>
            <person name="Kanamori-Katayama M."/>
            <person name="Suzuki M."/>
            <person name="Aoki J."/>
            <person name="Arakawa T."/>
            <person name="Iida J."/>
            <person name="Imamura K."/>
            <person name="Itoh M."/>
            <person name="Kato T."/>
            <person name="Kawaji H."/>
            <person name="Kawagashira N."/>
            <person name="Kawashima T."/>
            <person name="Kojima M."/>
            <person name="Kondo S."/>
            <person name="Konno H."/>
            <person name="Nakano K."/>
            <person name="Ninomiya N."/>
            <person name="Nishio T."/>
            <person name="Okada M."/>
            <person name="Plessy C."/>
            <person name="Shibata K."/>
            <person name="Shiraki T."/>
            <person name="Suzuki S."/>
            <person name="Tagami M."/>
            <person name="Waki K."/>
            <person name="Watahiki A."/>
            <person name="Okamura-Oho Y."/>
            <person name="Suzuki H."/>
            <person name="Kawai J."/>
            <person name="Hayashizaki Y."/>
        </authorList>
    </citation>
    <scope>NUCLEOTIDE SEQUENCE [LARGE SCALE MRNA] (ISOFORM 1)</scope>
    <source>
        <strain>C57BL/6J</strain>
        <tissue>Cerebellum</tissue>
        <tissue>Corpora quadrigemina</tissue>
        <tissue>Spinal cord</tissue>
    </source>
</reference>
<reference key="2">
    <citation type="journal article" date="2004" name="Genome Res.">
        <title>The status, quality, and expansion of the NIH full-length cDNA project: the Mammalian Gene Collection (MGC).</title>
        <authorList>
            <consortium name="The MGC Project Team"/>
        </authorList>
    </citation>
    <scope>NUCLEOTIDE SEQUENCE [LARGE SCALE MRNA] (ISOFORM 2)</scope>
    <source>
        <strain>Czech II</strain>
        <tissue>Mammary tumor</tissue>
    </source>
</reference>
<reference key="3">
    <citation type="journal article" date="2019" name="Biochem. Biophys. Rep.">
        <title>A novel upstream transcription factor 1 target gene N4bp2l1 that regulates adipogenesis.</title>
        <authorList>
            <person name="Watanabe K."/>
            <person name="Yokota K."/>
            <person name="Yoshida K."/>
            <person name="Matsumoto A."/>
            <person name="Iwamoto S."/>
        </authorList>
    </citation>
    <scope>FUNCTION</scope>
    <scope>INDUCTION BY USF1</scope>
    <scope>DEVELOPMENTAL STAGE</scope>
</reference>
<reference key="4">
    <citation type="journal article" date="2021" name="J. Diabetes Investig.">
        <title>N4BP2L1 interacts with dynactin and contributes to GLUT4 trafficking and glucose uptake in adipocytes.</title>
        <authorList>
            <person name="Watanabe K."/>
            <person name="Matsumoto A."/>
            <person name="Tsuda H."/>
            <person name="Iwamoto S."/>
        </authorList>
    </citation>
    <scope>INDUCTION BY FOXO1</scope>
    <scope>INTERACTION WITH DCTN4; DCTN5 AND DCTN6</scope>
</reference>
<accession>Q3V2Q8</accession>
<accession>Q3UU88</accession>
<accession>Q8BL78</accession>
<accession>Q8VE50</accession>
<proteinExistence type="evidence at protein level"/>
<keyword id="KW-0025">Alternative splicing</keyword>
<keyword id="KW-0217">Developmental protein</keyword>
<keyword id="KW-1185">Reference proteome</keyword>
<organism>
    <name type="scientific">Mus musculus</name>
    <name type="common">Mouse</name>
    <dbReference type="NCBI Taxonomy" id="10090"/>
    <lineage>
        <taxon>Eukaryota</taxon>
        <taxon>Metazoa</taxon>
        <taxon>Chordata</taxon>
        <taxon>Craniata</taxon>
        <taxon>Vertebrata</taxon>
        <taxon>Euteleostomi</taxon>
        <taxon>Mammalia</taxon>
        <taxon>Eutheria</taxon>
        <taxon>Euarchontoglires</taxon>
        <taxon>Glires</taxon>
        <taxon>Rodentia</taxon>
        <taxon>Myomorpha</taxon>
        <taxon>Muroidea</taxon>
        <taxon>Muridae</taxon>
        <taxon>Murinae</taxon>
        <taxon>Mus</taxon>
        <taxon>Mus</taxon>
    </lineage>
</organism>
<gene>
    <name type="primary">N4bp2l1</name>
</gene>
<name>N42L1_MOUSE</name>
<evidence type="ECO:0000256" key="1">
    <source>
        <dbReference type="SAM" id="MobiDB-lite"/>
    </source>
</evidence>
<evidence type="ECO:0000269" key="2">
    <source>
    </source>
</evidence>
<evidence type="ECO:0000269" key="3">
    <source>
    </source>
</evidence>
<evidence type="ECO:0000303" key="4">
    <source>
    </source>
</evidence>
<evidence type="ECO:0000305" key="5"/>